<reference key="1">
    <citation type="journal article" date="2004" name="Nat. Biotechnol.">
        <title>The genome sequence of the anaerobic, sulfate-reducing bacterium Desulfovibrio vulgaris Hildenborough.</title>
        <authorList>
            <person name="Heidelberg J.F."/>
            <person name="Seshadri R."/>
            <person name="Haveman S.A."/>
            <person name="Hemme C.L."/>
            <person name="Paulsen I.T."/>
            <person name="Kolonay J.F."/>
            <person name="Eisen J.A."/>
            <person name="Ward N.L."/>
            <person name="Methe B.A."/>
            <person name="Brinkac L.M."/>
            <person name="Daugherty S.C."/>
            <person name="DeBoy R.T."/>
            <person name="Dodson R.J."/>
            <person name="Durkin A.S."/>
            <person name="Madupu R."/>
            <person name="Nelson W.C."/>
            <person name="Sullivan S.A."/>
            <person name="Fouts D.E."/>
            <person name="Haft D.H."/>
            <person name="Selengut J."/>
            <person name="Peterson J.D."/>
            <person name="Davidsen T.M."/>
            <person name="Zafar N."/>
            <person name="Zhou L."/>
            <person name="Radune D."/>
            <person name="Dimitrov G."/>
            <person name="Hance M."/>
            <person name="Tran K."/>
            <person name="Khouri H.M."/>
            <person name="Gill J."/>
            <person name="Utterback T.R."/>
            <person name="Feldblyum T.V."/>
            <person name="Wall J.D."/>
            <person name="Voordouw G."/>
            <person name="Fraser C.M."/>
        </authorList>
    </citation>
    <scope>NUCLEOTIDE SEQUENCE [LARGE SCALE GENOMIC DNA]</scope>
    <source>
        <strain>ATCC 29579 / DSM 644 / CCUG 34227 / NCIMB 8303 / VKM B-1760 / Hildenborough</strain>
    </source>
</reference>
<dbReference type="EMBL" id="AE017285">
    <property type="protein sequence ID" value="AAS95556.1"/>
    <property type="molecule type" value="Genomic_DNA"/>
</dbReference>
<dbReference type="RefSeq" id="WP_010938375.1">
    <property type="nucleotide sequence ID" value="NC_002937.3"/>
</dbReference>
<dbReference type="RefSeq" id="YP_010297.1">
    <property type="nucleotide sequence ID" value="NC_002937.3"/>
</dbReference>
<dbReference type="STRING" id="882.DVU_1076"/>
<dbReference type="PaxDb" id="882-DVU_1076"/>
<dbReference type="EnsemblBacteria" id="AAS95556">
    <property type="protein sequence ID" value="AAS95556"/>
    <property type="gene ID" value="DVU_1076"/>
</dbReference>
<dbReference type="KEGG" id="dvu:DVU_1076"/>
<dbReference type="PATRIC" id="fig|882.5.peg.1014"/>
<dbReference type="eggNOG" id="COG0759">
    <property type="taxonomic scope" value="Bacteria"/>
</dbReference>
<dbReference type="HOGENOM" id="CLU_144811_6_1_7"/>
<dbReference type="OrthoDB" id="9801753at2"/>
<dbReference type="PhylomeDB" id="P61466"/>
<dbReference type="Proteomes" id="UP000002194">
    <property type="component" value="Chromosome"/>
</dbReference>
<dbReference type="GO" id="GO:0005886">
    <property type="term" value="C:plasma membrane"/>
    <property type="evidence" value="ECO:0007669"/>
    <property type="project" value="UniProtKB-SubCell"/>
</dbReference>
<dbReference type="HAMAP" id="MF_00386">
    <property type="entry name" value="UPF0161_YidD"/>
    <property type="match status" value="1"/>
</dbReference>
<dbReference type="InterPro" id="IPR002696">
    <property type="entry name" value="Membr_insert_effic_factor_YidD"/>
</dbReference>
<dbReference type="NCBIfam" id="TIGR00278">
    <property type="entry name" value="membrane protein insertion efficiency factor YidD"/>
    <property type="match status" value="1"/>
</dbReference>
<dbReference type="PANTHER" id="PTHR33383">
    <property type="entry name" value="MEMBRANE PROTEIN INSERTION EFFICIENCY FACTOR-RELATED"/>
    <property type="match status" value="1"/>
</dbReference>
<dbReference type="PANTHER" id="PTHR33383:SF1">
    <property type="entry name" value="MEMBRANE PROTEIN INSERTION EFFICIENCY FACTOR-RELATED"/>
    <property type="match status" value="1"/>
</dbReference>
<dbReference type="Pfam" id="PF01809">
    <property type="entry name" value="YidD"/>
    <property type="match status" value="1"/>
</dbReference>
<dbReference type="SMART" id="SM01234">
    <property type="entry name" value="Haemolytic"/>
    <property type="match status" value="1"/>
</dbReference>
<evidence type="ECO:0000255" key="1">
    <source>
        <dbReference type="HAMAP-Rule" id="MF_00386"/>
    </source>
</evidence>
<evidence type="ECO:0000256" key="2">
    <source>
        <dbReference type="SAM" id="MobiDB-lite"/>
    </source>
</evidence>
<accession>P61466</accession>
<name>YIDD_NITV2</name>
<protein>
    <recommendedName>
        <fullName evidence="1">Putative membrane protein insertion efficiency factor</fullName>
    </recommendedName>
</protein>
<comment type="function">
    <text evidence="1">Could be involved in insertion of integral membrane proteins into the membrane.</text>
</comment>
<comment type="subcellular location">
    <subcellularLocation>
        <location evidence="1">Cell inner membrane</location>
        <topology evidence="1">Peripheral membrane protein</topology>
        <orientation evidence="1">Cytoplasmic side</orientation>
    </subcellularLocation>
</comment>
<comment type="similarity">
    <text evidence="1">Belongs to the UPF0161 family.</text>
</comment>
<sequence>MSVMLRRLVVLPVRFYQYCISPLFPPACRYVPTCSAYTAEAVMRHGVMRGLWLAARRILRCHPWCAGGHDPVPPVPPQRYPSAQEH</sequence>
<feature type="chain" id="PRO_0000171820" description="Putative membrane protein insertion efficiency factor">
    <location>
        <begin position="1"/>
        <end position="86"/>
    </location>
</feature>
<feature type="region of interest" description="Disordered" evidence="2">
    <location>
        <begin position="66"/>
        <end position="86"/>
    </location>
</feature>
<gene>
    <name type="ordered locus">DVU_1076</name>
</gene>
<keyword id="KW-0997">Cell inner membrane</keyword>
<keyword id="KW-1003">Cell membrane</keyword>
<keyword id="KW-0472">Membrane</keyword>
<keyword id="KW-1185">Reference proteome</keyword>
<organism>
    <name type="scientific">Nitratidesulfovibrio vulgaris (strain ATCC 29579 / DSM 644 / CCUG 34227 / NCIMB 8303 / VKM B-1760 / Hildenborough)</name>
    <name type="common">Desulfovibrio vulgaris</name>
    <dbReference type="NCBI Taxonomy" id="882"/>
    <lineage>
        <taxon>Bacteria</taxon>
        <taxon>Pseudomonadati</taxon>
        <taxon>Thermodesulfobacteriota</taxon>
        <taxon>Desulfovibrionia</taxon>
        <taxon>Desulfovibrionales</taxon>
        <taxon>Desulfovibrionaceae</taxon>
        <taxon>Nitratidesulfovibrio</taxon>
    </lineage>
</organism>
<proteinExistence type="inferred from homology"/>